<name>AMPA_CUPTR</name>
<gene>
    <name evidence="1" type="primary">pepA</name>
    <name type="ordered locus">RALTA_A2464</name>
</gene>
<accession>B3R663</accession>
<proteinExistence type="inferred from homology"/>
<protein>
    <recommendedName>
        <fullName evidence="1">Probable cytosol aminopeptidase</fullName>
        <ecNumber evidence="1">3.4.11.1</ecNumber>
    </recommendedName>
    <alternativeName>
        <fullName evidence="1">Leucine aminopeptidase</fullName>
        <shortName evidence="1">LAP</shortName>
        <ecNumber evidence="1">3.4.11.10</ecNumber>
    </alternativeName>
    <alternativeName>
        <fullName evidence="1">Leucyl aminopeptidase</fullName>
    </alternativeName>
</protein>
<organism>
    <name type="scientific">Cupriavidus taiwanensis (strain DSM 17343 / BCRC 17206 / CCUG 44338 / CIP 107171 / LMG 19424 / R1)</name>
    <name type="common">Ralstonia taiwanensis (strain LMG 19424)</name>
    <dbReference type="NCBI Taxonomy" id="977880"/>
    <lineage>
        <taxon>Bacteria</taxon>
        <taxon>Pseudomonadati</taxon>
        <taxon>Pseudomonadota</taxon>
        <taxon>Betaproteobacteria</taxon>
        <taxon>Burkholderiales</taxon>
        <taxon>Burkholderiaceae</taxon>
        <taxon>Cupriavidus</taxon>
    </lineage>
</organism>
<sequence length="516" mass="54331">MEFSTKALDWSKAGQNGFLATKTDCLVVGLFEGQNLGGVAKALDVATKGLVGRLVKQGDFEGKRGTHLMLHEVAGVGAARVLLVGLGKEADFTDKAFADAVRTAVRALSSTRATSALWCLAQQAPQQRDVSWAVITTITLVREAGYRLLERHPGLKRANAQNAASGKPNGNDKSSLRKVVIAVDSGDARAATQAAVRGTAIANGMELTRDLGNLPSNICTPTYLANTARSIAKRHKLKAEILGRKQIEALNMGAFLAVTKGSAEPPQFIVLRYDGGGARQAPVVLVGKGITFDTGGISLKPGEGMDEMKYDMCGAASVLGTIQAVAEMGLKLNVVAVVPTCENMPSGVATKPGDVVTSMSGQTIEILNTDAEGRLILCDALTYVERFKPAAVIDVATLTGACIIALGHVNSGLYARSDALADALLQAGRRAMDTAWRMPLDDEYQDQLKSNFADMGNIGGRPAGSVTAACFLARFTEKYDWAHLDIAGTAWKSGAAKGATGRPVPLLTQFLMDRAA</sequence>
<keyword id="KW-0031">Aminopeptidase</keyword>
<keyword id="KW-0963">Cytoplasm</keyword>
<keyword id="KW-0378">Hydrolase</keyword>
<keyword id="KW-0464">Manganese</keyword>
<keyword id="KW-0479">Metal-binding</keyword>
<keyword id="KW-0645">Protease</keyword>
<dbReference type="EC" id="3.4.11.1" evidence="1"/>
<dbReference type="EC" id="3.4.11.10" evidence="1"/>
<dbReference type="EMBL" id="CU633749">
    <property type="protein sequence ID" value="CAQ70397.1"/>
    <property type="molecule type" value="Genomic_DNA"/>
</dbReference>
<dbReference type="RefSeq" id="WP_012353697.1">
    <property type="nucleotide sequence ID" value="NC_010528.1"/>
</dbReference>
<dbReference type="SMR" id="B3R663"/>
<dbReference type="MEROPS" id="M17.003"/>
<dbReference type="GeneID" id="29762196"/>
<dbReference type="KEGG" id="cti:RALTA_A2464"/>
<dbReference type="eggNOG" id="COG0260">
    <property type="taxonomic scope" value="Bacteria"/>
</dbReference>
<dbReference type="HOGENOM" id="CLU_013734_2_2_4"/>
<dbReference type="BioCyc" id="CTAI977880:RALTA_RS11980-MONOMER"/>
<dbReference type="Proteomes" id="UP000001692">
    <property type="component" value="Chromosome 1"/>
</dbReference>
<dbReference type="GO" id="GO:0005737">
    <property type="term" value="C:cytoplasm"/>
    <property type="evidence" value="ECO:0007669"/>
    <property type="project" value="UniProtKB-SubCell"/>
</dbReference>
<dbReference type="GO" id="GO:0030145">
    <property type="term" value="F:manganese ion binding"/>
    <property type="evidence" value="ECO:0007669"/>
    <property type="project" value="UniProtKB-UniRule"/>
</dbReference>
<dbReference type="GO" id="GO:0070006">
    <property type="term" value="F:metalloaminopeptidase activity"/>
    <property type="evidence" value="ECO:0007669"/>
    <property type="project" value="InterPro"/>
</dbReference>
<dbReference type="GO" id="GO:0006508">
    <property type="term" value="P:proteolysis"/>
    <property type="evidence" value="ECO:0007669"/>
    <property type="project" value="UniProtKB-KW"/>
</dbReference>
<dbReference type="CDD" id="cd00433">
    <property type="entry name" value="Peptidase_M17"/>
    <property type="match status" value="1"/>
</dbReference>
<dbReference type="FunFam" id="3.40.630.10:FF:000004">
    <property type="entry name" value="Probable cytosol aminopeptidase"/>
    <property type="match status" value="1"/>
</dbReference>
<dbReference type="Gene3D" id="3.40.220.10">
    <property type="entry name" value="Leucine Aminopeptidase, subunit E, domain 1"/>
    <property type="match status" value="1"/>
</dbReference>
<dbReference type="Gene3D" id="3.40.630.10">
    <property type="entry name" value="Zn peptidases"/>
    <property type="match status" value="1"/>
</dbReference>
<dbReference type="HAMAP" id="MF_00181">
    <property type="entry name" value="Cytosol_peptidase_M17"/>
    <property type="match status" value="1"/>
</dbReference>
<dbReference type="InterPro" id="IPR011356">
    <property type="entry name" value="Leucine_aapep/pepB"/>
</dbReference>
<dbReference type="InterPro" id="IPR043472">
    <property type="entry name" value="Macro_dom-like"/>
</dbReference>
<dbReference type="InterPro" id="IPR000819">
    <property type="entry name" value="Peptidase_M17_C"/>
</dbReference>
<dbReference type="InterPro" id="IPR023042">
    <property type="entry name" value="Peptidase_M17_leu_NH2_pept"/>
</dbReference>
<dbReference type="InterPro" id="IPR008283">
    <property type="entry name" value="Peptidase_M17_N"/>
</dbReference>
<dbReference type="NCBIfam" id="NF002073">
    <property type="entry name" value="PRK00913.1-2"/>
    <property type="match status" value="1"/>
</dbReference>
<dbReference type="NCBIfam" id="NF002074">
    <property type="entry name" value="PRK00913.1-4"/>
    <property type="match status" value="1"/>
</dbReference>
<dbReference type="NCBIfam" id="NF002077">
    <property type="entry name" value="PRK00913.2-4"/>
    <property type="match status" value="1"/>
</dbReference>
<dbReference type="PANTHER" id="PTHR11963:SF23">
    <property type="entry name" value="CYTOSOL AMINOPEPTIDASE"/>
    <property type="match status" value="1"/>
</dbReference>
<dbReference type="PANTHER" id="PTHR11963">
    <property type="entry name" value="LEUCINE AMINOPEPTIDASE-RELATED"/>
    <property type="match status" value="1"/>
</dbReference>
<dbReference type="Pfam" id="PF00883">
    <property type="entry name" value="Peptidase_M17"/>
    <property type="match status" value="1"/>
</dbReference>
<dbReference type="Pfam" id="PF02789">
    <property type="entry name" value="Peptidase_M17_N"/>
    <property type="match status" value="1"/>
</dbReference>
<dbReference type="PRINTS" id="PR00481">
    <property type="entry name" value="LAMNOPPTDASE"/>
</dbReference>
<dbReference type="SUPFAM" id="SSF52949">
    <property type="entry name" value="Macro domain-like"/>
    <property type="match status" value="1"/>
</dbReference>
<dbReference type="SUPFAM" id="SSF53187">
    <property type="entry name" value="Zn-dependent exopeptidases"/>
    <property type="match status" value="1"/>
</dbReference>
<dbReference type="PROSITE" id="PS00631">
    <property type="entry name" value="CYTOSOL_AP"/>
    <property type="match status" value="1"/>
</dbReference>
<comment type="function">
    <text evidence="1">Presumably involved in the processing and regular turnover of intracellular proteins. Catalyzes the removal of unsubstituted N-terminal amino acids from various peptides.</text>
</comment>
<comment type="catalytic activity">
    <reaction evidence="1">
        <text>Release of an N-terminal amino acid, Xaa-|-Yaa-, in which Xaa is preferably Leu, but may be other amino acids including Pro although not Arg or Lys, and Yaa may be Pro. Amino acid amides and methyl esters are also readily hydrolyzed, but rates on arylamides are exceedingly low.</text>
        <dbReference type="EC" id="3.4.11.1"/>
    </reaction>
</comment>
<comment type="catalytic activity">
    <reaction evidence="1">
        <text>Release of an N-terminal amino acid, preferentially leucine, but not glutamic or aspartic acids.</text>
        <dbReference type="EC" id="3.4.11.10"/>
    </reaction>
</comment>
<comment type="cofactor">
    <cofactor evidence="1">
        <name>Mn(2+)</name>
        <dbReference type="ChEBI" id="CHEBI:29035"/>
    </cofactor>
    <text evidence="1">Binds 2 manganese ions per subunit.</text>
</comment>
<comment type="subcellular location">
    <subcellularLocation>
        <location evidence="1">Cytoplasm</location>
    </subcellularLocation>
</comment>
<comment type="similarity">
    <text evidence="1">Belongs to the peptidase M17 family.</text>
</comment>
<reference key="1">
    <citation type="journal article" date="2008" name="Genome Res.">
        <title>Genome sequence of the beta-rhizobium Cupriavidus taiwanensis and comparative genomics of rhizobia.</title>
        <authorList>
            <person name="Amadou C."/>
            <person name="Pascal G."/>
            <person name="Mangenot S."/>
            <person name="Glew M."/>
            <person name="Bontemps C."/>
            <person name="Capela D."/>
            <person name="Carrere S."/>
            <person name="Cruveiller S."/>
            <person name="Dossat C."/>
            <person name="Lajus A."/>
            <person name="Marchetti M."/>
            <person name="Poinsot V."/>
            <person name="Rouy Z."/>
            <person name="Servin B."/>
            <person name="Saad M."/>
            <person name="Schenowitz C."/>
            <person name="Barbe V."/>
            <person name="Batut J."/>
            <person name="Medigue C."/>
            <person name="Masson-Boivin C."/>
        </authorList>
    </citation>
    <scope>NUCLEOTIDE SEQUENCE [LARGE SCALE GENOMIC DNA]</scope>
    <source>
        <strain>DSM 17343 / BCRC 17206 / CCUG 44338 / CIP 107171 / LMG 19424 / R1</strain>
    </source>
</reference>
<feature type="chain" id="PRO_1000098318" description="Probable cytosol aminopeptidase">
    <location>
        <begin position="1"/>
        <end position="516"/>
    </location>
</feature>
<feature type="active site" evidence="1">
    <location>
        <position position="300"/>
    </location>
</feature>
<feature type="active site" evidence="1">
    <location>
        <position position="374"/>
    </location>
</feature>
<feature type="binding site" evidence="1">
    <location>
        <position position="288"/>
    </location>
    <ligand>
        <name>Mn(2+)</name>
        <dbReference type="ChEBI" id="CHEBI:29035"/>
        <label>2</label>
    </ligand>
</feature>
<feature type="binding site" evidence="1">
    <location>
        <position position="293"/>
    </location>
    <ligand>
        <name>Mn(2+)</name>
        <dbReference type="ChEBI" id="CHEBI:29035"/>
        <label>1</label>
    </ligand>
</feature>
<feature type="binding site" evidence="1">
    <location>
        <position position="293"/>
    </location>
    <ligand>
        <name>Mn(2+)</name>
        <dbReference type="ChEBI" id="CHEBI:29035"/>
        <label>2</label>
    </ligand>
</feature>
<feature type="binding site" evidence="1">
    <location>
        <position position="311"/>
    </location>
    <ligand>
        <name>Mn(2+)</name>
        <dbReference type="ChEBI" id="CHEBI:29035"/>
        <label>2</label>
    </ligand>
</feature>
<feature type="binding site" evidence="1">
    <location>
        <position position="370"/>
    </location>
    <ligand>
        <name>Mn(2+)</name>
        <dbReference type="ChEBI" id="CHEBI:29035"/>
        <label>1</label>
    </ligand>
</feature>
<feature type="binding site" evidence="1">
    <location>
        <position position="372"/>
    </location>
    <ligand>
        <name>Mn(2+)</name>
        <dbReference type="ChEBI" id="CHEBI:29035"/>
        <label>1</label>
    </ligand>
</feature>
<feature type="binding site" evidence="1">
    <location>
        <position position="372"/>
    </location>
    <ligand>
        <name>Mn(2+)</name>
        <dbReference type="ChEBI" id="CHEBI:29035"/>
        <label>2</label>
    </ligand>
</feature>
<evidence type="ECO:0000255" key="1">
    <source>
        <dbReference type="HAMAP-Rule" id="MF_00181"/>
    </source>
</evidence>